<name>AMPG4_RICCN</name>
<proteinExistence type="inferred from homology"/>
<organism>
    <name type="scientific">Rickettsia conorii (strain ATCC VR-613 / Malish 7)</name>
    <dbReference type="NCBI Taxonomy" id="272944"/>
    <lineage>
        <taxon>Bacteria</taxon>
        <taxon>Pseudomonadati</taxon>
        <taxon>Pseudomonadota</taxon>
        <taxon>Alphaproteobacteria</taxon>
        <taxon>Rickettsiales</taxon>
        <taxon>Rickettsiaceae</taxon>
        <taxon>Rickettsieae</taxon>
        <taxon>Rickettsia</taxon>
        <taxon>spotted fever group</taxon>
    </lineage>
</organism>
<sequence>MRITKIFKDYRLFEIFILGIVSGMPLVIIFSTLAVWLKESGIDIAVITTFAVARLSYSLKVFWSPLVDNFKIPFLSRWGHRKSWLILCSSLMALVLIAMSKENPEVSLTSFYFLTILLGFLSSTFDIAVDALRIDKFDQETQSIASATAVFGYRIGMLITGAGALYLAEITGNNWQLTFCVIAIIFVVATIFIITVNEKELVREKINIISITSWISTVINPFKDFFKREFAVTILLAVIFFKLGDAMLGAVASPFYIELGYTKGEIAIIAKLYGLIATLVGGFVGGIVMYRVGNFKGLIITGIAQSLTHFAFIWLNHQPPSFEALLIAITIENFAAAMGATALVGYIGNLCNKKYSATQYALLSSASSLCNNTVTIYAGKLVNMMGWDGFFLFTIILALPALFILMYLNTKVNV</sequence>
<evidence type="ECO:0000250" key="1"/>
<evidence type="ECO:0000255" key="2"/>
<evidence type="ECO:0000305" key="3"/>
<keyword id="KW-0997">Cell inner membrane</keyword>
<keyword id="KW-1003">Cell membrane</keyword>
<keyword id="KW-0472">Membrane</keyword>
<keyword id="KW-0812">Transmembrane</keyword>
<keyword id="KW-1133">Transmembrane helix</keyword>
<keyword id="KW-0813">Transport</keyword>
<reference key="1">
    <citation type="journal article" date="2001" name="Science">
        <title>Mechanisms of evolution in Rickettsia conorii and R. prowazekii.</title>
        <authorList>
            <person name="Ogata H."/>
            <person name="Audic S."/>
            <person name="Renesto-Audiffren P."/>
            <person name="Fournier P.-E."/>
            <person name="Barbe V."/>
            <person name="Samson D."/>
            <person name="Roux V."/>
            <person name="Cossart P."/>
            <person name="Weissenbach J."/>
            <person name="Claverie J.-M."/>
            <person name="Raoult D."/>
        </authorList>
    </citation>
    <scope>NUCLEOTIDE SEQUENCE [LARGE SCALE GENOMIC DNA]</scope>
    <source>
        <strain>ATCC VR-613 / Malish 7</strain>
    </source>
</reference>
<gene>
    <name type="primary">ampG4</name>
    <name type="ordered locus">RC0535</name>
</gene>
<dbReference type="EMBL" id="AE006914">
    <property type="protein sequence ID" value="AAL03073.1"/>
    <property type="molecule type" value="Genomic_DNA"/>
</dbReference>
<dbReference type="PIR" id="G97766">
    <property type="entry name" value="G97766"/>
</dbReference>
<dbReference type="RefSeq" id="WP_010977172.1">
    <property type="nucleotide sequence ID" value="NC_003103.1"/>
</dbReference>
<dbReference type="SMR" id="Q92I85"/>
<dbReference type="GeneID" id="928743"/>
<dbReference type="KEGG" id="rco:RC0535"/>
<dbReference type="PATRIC" id="fig|272944.4.peg.614"/>
<dbReference type="HOGENOM" id="CLU_029352_1_2_5"/>
<dbReference type="Proteomes" id="UP000000816">
    <property type="component" value="Chromosome"/>
</dbReference>
<dbReference type="GO" id="GO:0005886">
    <property type="term" value="C:plasma membrane"/>
    <property type="evidence" value="ECO:0007669"/>
    <property type="project" value="UniProtKB-SubCell"/>
</dbReference>
<dbReference type="GO" id="GO:0022857">
    <property type="term" value="F:transmembrane transporter activity"/>
    <property type="evidence" value="ECO:0007669"/>
    <property type="project" value="InterPro"/>
</dbReference>
<dbReference type="CDD" id="cd17486">
    <property type="entry name" value="MFS_AmpG_like"/>
    <property type="match status" value="1"/>
</dbReference>
<dbReference type="Gene3D" id="1.20.1250.20">
    <property type="entry name" value="MFS general substrate transporter like domains"/>
    <property type="match status" value="2"/>
</dbReference>
<dbReference type="InterPro" id="IPR004752">
    <property type="entry name" value="AmpG_permease/AT-1"/>
</dbReference>
<dbReference type="InterPro" id="IPR011701">
    <property type="entry name" value="MFS"/>
</dbReference>
<dbReference type="InterPro" id="IPR020846">
    <property type="entry name" value="MFS_dom"/>
</dbReference>
<dbReference type="InterPro" id="IPR036259">
    <property type="entry name" value="MFS_trans_sf"/>
</dbReference>
<dbReference type="NCBIfam" id="TIGR00901">
    <property type="entry name" value="2A0125"/>
    <property type="match status" value="1"/>
</dbReference>
<dbReference type="PANTHER" id="PTHR12778:SF10">
    <property type="entry name" value="MAJOR FACILITATOR SUPERFAMILY DOMAIN-CONTAINING PROTEIN 3"/>
    <property type="match status" value="1"/>
</dbReference>
<dbReference type="PANTHER" id="PTHR12778">
    <property type="entry name" value="SOLUTE CARRIER FAMILY 33 ACETYL-COA TRANSPORTER -RELATED"/>
    <property type="match status" value="1"/>
</dbReference>
<dbReference type="Pfam" id="PF07690">
    <property type="entry name" value="MFS_1"/>
    <property type="match status" value="1"/>
</dbReference>
<dbReference type="SUPFAM" id="SSF103473">
    <property type="entry name" value="MFS general substrate transporter"/>
    <property type="match status" value="1"/>
</dbReference>
<dbReference type="PROSITE" id="PS50850">
    <property type="entry name" value="MFS"/>
    <property type="match status" value="1"/>
</dbReference>
<feature type="chain" id="PRO_0000281094" description="Putative transporter AmpG 4">
    <location>
        <begin position="1"/>
        <end position="414"/>
    </location>
</feature>
<feature type="transmembrane region" description="Helical" evidence="2">
    <location>
        <begin position="15"/>
        <end position="35"/>
    </location>
</feature>
<feature type="transmembrane region" description="Helical" evidence="2">
    <location>
        <begin position="44"/>
        <end position="63"/>
    </location>
</feature>
<feature type="transmembrane region" description="Helical" evidence="2">
    <location>
        <begin position="84"/>
        <end position="104"/>
    </location>
</feature>
<feature type="transmembrane region" description="Helical" evidence="2">
    <location>
        <begin position="109"/>
        <end position="129"/>
    </location>
</feature>
<feature type="transmembrane region" description="Helical" evidence="2">
    <location>
        <begin position="150"/>
        <end position="170"/>
    </location>
</feature>
<feature type="transmembrane region" description="Helical" evidence="2">
    <location>
        <begin position="177"/>
        <end position="197"/>
    </location>
</feature>
<feature type="transmembrane region" description="Helical" evidence="2">
    <location>
        <begin position="230"/>
        <end position="250"/>
    </location>
</feature>
<feature type="transmembrane region" description="Helical" evidence="2">
    <location>
        <begin position="268"/>
        <end position="288"/>
    </location>
</feature>
<feature type="transmembrane region" description="Helical" evidence="2">
    <location>
        <begin position="295"/>
        <end position="315"/>
    </location>
</feature>
<feature type="transmembrane region" description="Helical" evidence="2">
    <location>
        <begin position="324"/>
        <end position="344"/>
    </location>
</feature>
<feature type="transmembrane region" description="Helical" evidence="2">
    <location>
        <begin position="360"/>
        <end position="379"/>
    </location>
</feature>
<feature type="transmembrane region" description="Helical" evidence="2">
    <location>
        <begin position="389"/>
        <end position="409"/>
    </location>
</feature>
<comment type="subcellular location">
    <subcellularLocation>
        <location evidence="1">Cell inner membrane</location>
        <topology evidence="1">Multi-pass membrane protein</topology>
    </subcellularLocation>
</comment>
<comment type="similarity">
    <text evidence="3">Belongs to the major facilitator superfamily.</text>
</comment>
<accession>Q92I85</accession>
<protein>
    <recommendedName>
        <fullName>Putative transporter AmpG 4</fullName>
    </recommendedName>
</protein>